<name>RS19_METS5</name>
<proteinExistence type="inferred from homology"/>
<sequence length="140" mass="16245">MSVEIPAEWKKFRYRGKSLEELLNMPMDDFIKLLPARQRRSLRKGFTPSERTLIEKIRKIRRDSKADKPIKTHVRSLVILPEMVGLKFAVYNGKQFVEFQVVPEMIGHYLGEFSIPIQKVEHGEPGLKATRSSLFMAMKG</sequence>
<feature type="chain" id="PRO_1000072510" description="Small ribosomal subunit protein uS19">
    <location>
        <begin position="1"/>
        <end position="140"/>
    </location>
</feature>
<keyword id="KW-1185">Reference proteome</keyword>
<keyword id="KW-0687">Ribonucleoprotein</keyword>
<keyword id="KW-0689">Ribosomal protein</keyword>
<keyword id="KW-0694">RNA-binding</keyword>
<keyword id="KW-0699">rRNA-binding</keyword>
<protein>
    <recommendedName>
        <fullName evidence="1">Small ribosomal subunit protein uS19</fullName>
    </recommendedName>
    <alternativeName>
        <fullName evidence="2">30S ribosomal protein S19</fullName>
    </alternativeName>
</protein>
<evidence type="ECO:0000255" key="1">
    <source>
        <dbReference type="HAMAP-Rule" id="MF_00531"/>
    </source>
</evidence>
<evidence type="ECO:0000305" key="2"/>
<reference key="1">
    <citation type="journal article" date="2008" name="Appl. Environ. Microbiol.">
        <title>The genome sequence of the metal-mobilizing, extremely thermoacidophilic archaeon Metallosphaera sedula provides insights into bioleaching-associated metabolism.</title>
        <authorList>
            <person name="Auernik K.S."/>
            <person name="Maezato Y."/>
            <person name="Blum P.H."/>
            <person name="Kelly R.M."/>
        </authorList>
    </citation>
    <scope>NUCLEOTIDE SEQUENCE [LARGE SCALE GENOMIC DNA]</scope>
    <source>
        <strain>ATCC 51363 / DSM 5348 / JCM 9185 / NBRC 15509 / TH2</strain>
    </source>
</reference>
<gene>
    <name evidence="1" type="primary">rps19</name>
    <name type="ordered locus">Msed_0095</name>
</gene>
<comment type="function">
    <text evidence="1">Protein S19 forms a complex with S13 that binds strongly to the 16S ribosomal RNA.</text>
</comment>
<comment type="similarity">
    <text evidence="1">Belongs to the universal ribosomal protein uS19 family.</text>
</comment>
<organism>
    <name type="scientific">Metallosphaera sedula (strain ATCC 51363 / DSM 5348 / JCM 9185 / NBRC 15509 / TH2)</name>
    <dbReference type="NCBI Taxonomy" id="399549"/>
    <lineage>
        <taxon>Archaea</taxon>
        <taxon>Thermoproteota</taxon>
        <taxon>Thermoprotei</taxon>
        <taxon>Sulfolobales</taxon>
        <taxon>Sulfolobaceae</taxon>
        <taxon>Metallosphaera</taxon>
    </lineage>
</organism>
<accession>A4YCX0</accession>
<dbReference type="EMBL" id="CP000682">
    <property type="protein sequence ID" value="ABP94272.1"/>
    <property type="molecule type" value="Genomic_DNA"/>
</dbReference>
<dbReference type="RefSeq" id="WP_011921241.1">
    <property type="nucleotide sequence ID" value="NZ_CP139956.1"/>
</dbReference>
<dbReference type="SMR" id="A4YCX0"/>
<dbReference type="STRING" id="399549.Msed_0095"/>
<dbReference type="KEGG" id="mse:Msed_0095"/>
<dbReference type="eggNOG" id="arCOG04099">
    <property type="taxonomic scope" value="Archaea"/>
</dbReference>
<dbReference type="HOGENOM" id="CLU_097347_1_0_2"/>
<dbReference type="Proteomes" id="UP000000242">
    <property type="component" value="Chromosome"/>
</dbReference>
<dbReference type="GO" id="GO:0022627">
    <property type="term" value="C:cytosolic small ribosomal subunit"/>
    <property type="evidence" value="ECO:0007669"/>
    <property type="project" value="TreeGrafter"/>
</dbReference>
<dbReference type="GO" id="GO:0019843">
    <property type="term" value="F:rRNA binding"/>
    <property type="evidence" value="ECO:0007669"/>
    <property type="project" value="UniProtKB-UniRule"/>
</dbReference>
<dbReference type="GO" id="GO:0003735">
    <property type="term" value="F:structural constituent of ribosome"/>
    <property type="evidence" value="ECO:0007669"/>
    <property type="project" value="InterPro"/>
</dbReference>
<dbReference type="GO" id="GO:0000028">
    <property type="term" value="P:ribosomal small subunit assembly"/>
    <property type="evidence" value="ECO:0007669"/>
    <property type="project" value="TreeGrafter"/>
</dbReference>
<dbReference type="GO" id="GO:0006412">
    <property type="term" value="P:translation"/>
    <property type="evidence" value="ECO:0007669"/>
    <property type="project" value="UniProtKB-UniRule"/>
</dbReference>
<dbReference type="FunFam" id="3.30.860.10:FF:000002">
    <property type="entry name" value="40S ribosomal protein S15"/>
    <property type="match status" value="1"/>
</dbReference>
<dbReference type="Gene3D" id="3.30.860.10">
    <property type="entry name" value="30s Ribosomal Protein S19, Chain A"/>
    <property type="match status" value="1"/>
</dbReference>
<dbReference type="HAMAP" id="MF_00531">
    <property type="entry name" value="Ribosomal_uS19"/>
    <property type="match status" value="1"/>
</dbReference>
<dbReference type="InterPro" id="IPR002222">
    <property type="entry name" value="Ribosomal_uS19"/>
</dbReference>
<dbReference type="InterPro" id="IPR005713">
    <property type="entry name" value="Ribosomal_uS19_euk/arc"/>
</dbReference>
<dbReference type="InterPro" id="IPR023575">
    <property type="entry name" value="Ribosomal_uS19_SF"/>
</dbReference>
<dbReference type="NCBIfam" id="NF003121">
    <property type="entry name" value="PRK04038.1"/>
    <property type="match status" value="1"/>
</dbReference>
<dbReference type="NCBIfam" id="TIGR01025">
    <property type="entry name" value="uS19_arch"/>
    <property type="match status" value="1"/>
</dbReference>
<dbReference type="PANTHER" id="PTHR11880">
    <property type="entry name" value="RIBOSOMAL PROTEIN S19P FAMILY MEMBER"/>
    <property type="match status" value="1"/>
</dbReference>
<dbReference type="PANTHER" id="PTHR11880:SF2">
    <property type="entry name" value="SMALL RIBOSOMAL SUBUNIT PROTEIN US19"/>
    <property type="match status" value="1"/>
</dbReference>
<dbReference type="Pfam" id="PF00203">
    <property type="entry name" value="Ribosomal_S19"/>
    <property type="match status" value="1"/>
</dbReference>
<dbReference type="PIRSF" id="PIRSF002144">
    <property type="entry name" value="Ribosomal_S19"/>
    <property type="match status" value="1"/>
</dbReference>
<dbReference type="PRINTS" id="PR00975">
    <property type="entry name" value="RIBOSOMALS19"/>
</dbReference>
<dbReference type="SUPFAM" id="SSF54570">
    <property type="entry name" value="Ribosomal protein S19"/>
    <property type="match status" value="1"/>
</dbReference>